<evidence type="ECO:0000250" key="1"/>
<evidence type="ECO:0000255" key="2"/>
<evidence type="ECO:0000305" key="3"/>
<keyword id="KW-0010">Activator</keyword>
<keyword id="KW-0963">Cytoplasm</keyword>
<keyword id="KW-0238">DNA-binding</keyword>
<keyword id="KW-0804">Transcription</keyword>
<keyword id="KW-0805">Transcription regulation</keyword>
<keyword id="KW-0843">Virulence</keyword>
<sequence>MSNKVQRFIEAERELSQLKHWLKTTHKISIEEFVVLFKVYEAEKISGKELRDTLHFEMLWDTSKIDVIIRKIYKKELISKLRSETDERQVFYFYSTSQKKLLDKITKEIEVLSVTN</sequence>
<gene>
    <name type="primary">sarV</name>
    <name type="ordered locus">SACOL2258</name>
</gene>
<protein>
    <recommendedName>
        <fullName>HTH-type transcriptional regulator SarV</fullName>
    </recommendedName>
    <alternativeName>
        <fullName>Staphylococcal accessory regulator V</fullName>
    </alternativeName>
</protein>
<accession>Q5HDU2</accession>
<comment type="function">
    <text evidence="1">Part of the pathway by which MgrA and SarA control autolysis.</text>
</comment>
<comment type="subcellular location">
    <subcellularLocation>
        <location evidence="1">Cytoplasm</location>
    </subcellularLocation>
</comment>
<comment type="similarity">
    <text evidence="3">Belongs to the SarA family.</text>
</comment>
<organism>
    <name type="scientific">Staphylococcus aureus (strain COL)</name>
    <dbReference type="NCBI Taxonomy" id="93062"/>
    <lineage>
        <taxon>Bacteria</taxon>
        <taxon>Bacillati</taxon>
        <taxon>Bacillota</taxon>
        <taxon>Bacilli</taxon>
        <taxon>Bacillales</taxon>
        <taxon>Staphylococcaceae</taxon>
        <taxon>Staphylococcus</taxon>
    </lineage>
</organism>
<dbReference type="EMBL" id="CP000046">
    <property type="protein sequence ID" value="AAW37130.1"/>
    <property type="molecule type" value="Genomic_DNA"/>
</dbReference>
<dbReference type="RefSeq" id="WP_000066900.1">
    <property type="nucleotide sequence ID" value="NZ_JBGOFO010000004.1"/>
</dbReference>
<dbReference type="SMR" id="Q5HDU2"/>
<dbReference type="KEGG" id="sac:SACOL2258"/>
<dbReference type="HOGENOM" id="CLU_2095367_0_0_9"/>
<dbReference type="Proteomes" id="UP000000530">
    <property type="component" value="Chromosome"/>
</dbReference>
<dbReference type="GO" id="GO:0005737">
    <property type="term" value="C:cytoplasm"/>
    <property type="evidence" value="ECO:0007669"/>
    <property type="project" value="UniProtKB-SubCell"/>
</dbReference>
<dbReference type="GO" id="GO:0003677">
    <property type="term" value="F:DNA binding"/>
    <property type="evidence" value="ECO:0007669"/>
    <property type="project" value="UniProtKB-KW"/>
</dbReference>
<dbReference type="GO" id="GO:0006355">
    <property type="term" value="P:regulation of DNA-templated transcription"/>
    <property type="evidence" value="ECO:0007669"/>
    <property type="project" value="InterPro"/>
</dbReference>
<dbReference type="Gene3D" id="1.10.10.10">
    <property type="entry name" value="Winged helix-like DNA-binding domain superfamily/Winged helix DNA-binding domain"/>
    <property type="match status" value="1"/>
</dbReference>
<dbReference type="InterPro" id="IPR010166">
    <property type="entry name" value="SarA/Rot_dom"/>
</dbReference>
<dbReference type="InterPro" id="IPR055166">
    <property type="entry name" value="Transc_reg_Sar_Rot_HTH"/>
</dbReference>
<dbReference type="InterPro" id="IPR036388">
    <property type="entry name" value="WH-like_DNA-bd_sf"/>
</dbReference>
<dbReference type="InterPro" id="IPR036390">
    <property type="entry name" value="WH_DNA-bd_sf"/>
</dbReference>
<dbReference type="NCBIfam" id="TIGR01889">
    <property type="entry name" value="Staph_reg_Sar"/>
    <property type="match status" value="1"/>
</dbReference>
<dbReference type="Pfam" id="PF22381">
    <property type="entry name" value="Staph_reg_Sar_Rot"/>
    <property type="match status" value="1"/>
</dbReference>
<dbReference type="SUPFAM" id="SSF46785">
    <property type="entry name" value="Winged helix' DNA-binding domain"/>
    <property type="match status" value="1"/>
</dbReference>
<proteinExistence type="inferred from homology"/>
<reference key="1">
    <citation type="journal article" date="2005" name="J. Bacteriol.">
        <title>Insights on evolution of virulence and resistance from the complete genome analysis of an early methicillin-resistant Staphylococcus aureus strain and a biofilm-producing methicillin-resistant Staphylococcus epidermidis strain.</title>
        <authorList>
            <person name="Gill S.R."/>
            <person name="Fouts D.E."/>
            <person name="Archer G.L."/>
            <person name="Mongodin E.F."/>
            <person name="DeBoy R.T."/>
            <person name="Ravel J."/>
            <person name="Paulsen I.T."/>
            <person name="Kolonay J.F."/>
            <person name="Brinkac L.M."/>
            <person name="Beanan M.J."/>
            <person name="Dodson R.J."/>
            <person name="Daugherty S.C."/>
            <person name="Madupu R."/>
            <person name="Angiuoli S.V."/>
            <person name="Durkin A.S."/>
            <person name="Haft D.H."/>
            <person name="Vamathevan J.J."/>
            <person name="Khouri H."/>
            <person name="Utterback T.R."/>
            <person name="Lee C."/>
            <person name="Dimitrov G."/>
            <person name="Jiang L."/>
            <person name="Qin H."/>
            <person name="Weidman J."/>
            <person name="Tran K."/>
            <person name="Kang K.H."/>
            <person name="Hance I.R."/>
            <person name="Nelson K.E."/>
            <person name="Fraser C.M."/>
        </authorList>
    </citation>
    <scope>NUCLEOTIDE SEQUENCE [LARGE SCALE GENOMIC DNA]</scope>
    <source>
        <strain>COL</strain>
    </source>
</reference>
<name>SARV_STAAC</name>
<feature type="chain" id="PRO_0000219609" description="HTH-type transcriptional regulator SarV">
    <location>
        <begin position="1"/>
        <end position="116"/>
    </location>
</feature>
<feature type="DNA-binding region" description="H-T-H motif" evidence="2">
    <location>
        <begin position="51"/>
        <end position="74"/>
    </location>
</feature>